<sequence length="261" mass="29222">INTITYDAGNTTINKYATFMESLRNEAKDPSLQCYGIPMLPNNSSTIKYLLVKLQGASQKTITLMLRRNNLYVMGYSDPFNGNCRYHIFNDITGTERTNVENTLCSSSSSRDAKPINYNSLYSTLEKKAEVNSRSQVQLGIQILSSDIGKISGQSSFTDKTEAKFLLVAIQMVSEAARFKYIENQVKTNFNRDFSPNDKILDLEENWGKISTAIHDATNGALPKPLELKNADGTKWIVLRVDEIKPDMGLLNYVNGTCQTT</sequence>
<reference key="1">
    <citation type="journal article" date="2009" name="Biochimie">
        <title>Structural characterization and comparative modeling of PD-Ls 1-3, type 1 ribosome-inactivating proteins from summer leaves of Phytolacca dioica L.</title>
        <authorList>
            <person name="Di Maro A."/>
            <person name="Chambery A."/>
            <person name="Carafa V."/>
            <person name="Costantini S."/>
            <person name="Colonna G."/>
            <person name="Parente A."/>
        </authorList>
    </citation>
    <scope>PROTEIN SEQUENCE</scope>
    <scope>GLYCOSYLATION AT ASN-10; ASN-43 AND ASN-255</scope>
    <scope>MASS SPECTROMETRY</scope>
    <source>
        <tissue>Leaf</tissue>
    </source>
</reference>
<reference evidence="13" key="2">
    <citation type="journal article" date="1999" name="Planta">
        <title>Isolation and characterization of four type-1 ribosome-inactivating proteins, with polynucleotide:adenosine glycosidase activity, from leaves of Phytolacca dioica L.</title>
        <authorList>
            <person name="Di Maro A."/>
            <person name="Valbonesi P."/>
            <person name="Bolognesi A."/>
            <person name="Stirpe F."/>
            <person name="De Luca P."/>
            <person name="Siniscalco Gigliano G."/>
            <person name="Gaudio L."/>
            <person name="Delli-Bovi P."/>
            <person name="Ferranti P."/>
            <person name="Malorni A."/>
            <person name="Parente A."/>
        </authorList>
    </citation>
    <scope>PROTEIN SEQUENCE OF 1-45</scope>
    <scope>GLYCOSYLATION AT ASN-43</scope>
    <scope>FUNCTION</scope>
    <scope>CATALYTIC ACTIVITY</scope>
    <scope>MASS SPECTROMETRY</scope>
    <source>
        <tissue evidence="4">Leaf</tissue>
    </source>
</reference>
<reference evidence="15" key="3">
    <citation type="journal article" date="2010" name="Mol. Biosyst.">
        <title>The role of the glycan moiety on the structure-function relationships of PD-L1, type 1 ribosome-inactivating protein from P. dioica leaves.</title>
        <authorList>
            <person name="Severino V."/>
            <person name="Chambery A."/>
            <person name="Di Maro A."/>
            <person name="Marasco D."/>
            <person name="Ruggiero A."/>
            <person name="Berisio R."/>
            <person name="Giansanti F."/>
            <person name="Ippoliti R."/>
            <person name="Parente A."/>
        </authorList>
    </citation>
    <scope>PROTEIN SEQUENCE OF 1-10</scope>
    <scope>X-RAY CRYSTALLOGRAPHY (1.65 ANGSTROMS) OF PD-L1 IN COMPLEX WITH ADENINE</scope>
    <scope>FUNCTION</scope>
    <scope>CATALYTIC ACTIVITY</scope>
    <scope>TISSUE SPECIFICITY</scope>
    <scope>PTM</scope>
    <scope>GLYCOSYLATION AT ASN-10</scope>
    <scope>DISULFIDE BONDS</scope>
    <scope>CIRCULAR DICHROISM ANALYSIS</scope>
</reference>
<reference evidence="13" key="4">
    <citation type="journal article" date="2005" name="Biol. Chem.">
        <title>Nicking activity on pBR322 DNA of ribosome inactivating proteins from Phytolacca dioica L. leaves.</title>
        <authorList>
            <person name="Aceto S."/>
            <person name="Di Maro A."/>
            <person name="Conforto B."/>
            <person name="Siniscalco Gigliano G."/>
            <person name="Parente A."/>
            <person name="Delli-Bovi P."/>
            <person name="Gaudio L."/>
        </authorList>
    </citation>
    <scope>FUNCTION</scope>
    <source>
        <tissue evidence="5">Leaf</tissue>
    </source>
</reference>
<reference evidence="13" key="5">
    <citation type="journal article" date="2008" name="Planta">
        <title>Type 1 ribosome-inactivating proteins from Phytolacca dioica L. leaves: differential seasonal and age expression, and cellular localization.</title>
        <authorList>
            <person name="Parente A."/>
            <person name="Conforto B."/>
            <person name="Di Maro A."/>
            <person name="Chambery A."/>
            <person name="De Luca P."/>
            <person name="Bolognesi A."/>
            <person name="Iriti M."/>
            <person name="Faoro F."/>
        </authorList>
    </citation>
    <scope>DEVELOPMENTAL STAGE</scope>
</reference>
<reference evidence="14" key="6">
    <citation type="journal article" date="2009" name="Biopolymers">
        <title>Crystal structure of PD-L1, a ribosome inactivating protein from Phytolacca dioica L. leaves with the property to induce DNA cleavage.</title>
        <authorList>
            <person name="Ruggiero A."/>
            <person name="Di Maro A."/>
            <person name="Severino V."/>
            <person name="Chambery A."/>
            <person name="Berisio R."/>
        </authorList>
    </citation>
    <scope>X-RAY CRYSTALLOGRAPHY (1.45 ANGSTROMS) OF PD-L1</scope>
    <scope>FUNCTION</scope>
    <scope>TISSUE SPECIFICITY</scope>
    <scope>PTM</scope>
    <scope>GLYCOSYLATION AT ASN-10</scope>
    <scope>DISULFIDE BONDS</scope>
</reference>
<keyword id="KW-0002">3D-structure</keyword>
<keyword id="KW-0903">Direct protein sequencing</keyword>
<keyword id="KW-1015">Disulfide bond</keyword>
<keyword id="KW-0325">Glycoprotein</keyword>
<keyword id="KW-0378">Hydrolase</keyword>
<keyword id="KW-0611">Plant defense</keyword>
<keyword id="KW-0652">Protein synthesis inhibitor</keyword>
<keyword id="KW-0800">Toxin</keyword>
<comment type="function">
    <text evidence="4 5 8 9">Inhibits protein synthesis (PubMed:10213004, PubMed:20174685). Has adenine polynucleotide glycosidase activity on herring sperm (hs)DNA and poly(A) substrates (PubMed:20174685). Cleaves supercoiled pBR322 dsDNA (PubMed:15899692, PubMed:19452522).</text>
</comment>
<comment type="catalytic activity">
    <reaction evidence="4 9">
        <text>Endohydrolysis of the N-glycosidic bond at one specific adenosine on the 28S rRNA.</text>
        <dbReference type="EC" id="3.2.2.22"/>
    </reaction>
</comment>
<comment type="tissue specificity">
    <text evidence="8 9">Expressed in leaves (at protein level).</text>
</comment>
<comment type="developmental stage">
    <text evidence="6">Detected in developing and mature leaves of adult plants. Levels of PD-L1 are highest during the winter, levels of PD-L2 remain constant throughout the year. Not detected in young (8-34 month old) plants.</text>
</comment>
<comment type="PTM">
    <text evidence="8 9">N-glycosylated (PubMed:19452522, PubMed:20174685). Loss of glycosylation does not affect DNA-cleaving ability (PubMed:19452522). Loss of glycosylation does not affect protein synthesis inhibition, but increases adenine polynucleotide glycosidase activity likely as a consequence of the increased accessibility of substrates to the active site pocket in the absence of glycosylation (PubMed:20174685).</text>
</comment>
<comment type="mass spectrometry" mass="32715.0" error="1.0" method="Electrospray" evidence="4">
    <text>PD-L1.</text>
</comment>
<comment type="mass spectrometry" mass="31542.0" error="1.0" method="Electrospray" evidence="4">
    <text>PD-L2.</text>
</comment>
<comment type="mass spectrometry" mass="31560.5" method="Electrospray" evidence="7">
    <text>PD-L2.</text>
</comment>
<comment type="miscellaneous">
    <text>2 forms exist, PD-L1 and PD-L2, that differ in their post-translational modifications.</text>
</comment>
<comment type="similarity">
    <text evidence="2">Belongs to the ribosome-inactivating protein family. Type 1 RIP subfamily.</text>
</comment>
<organism>
    <name type="scientific">Phytolacca dioica</name>
    <name type="common">Bella sombra tree</name>
    <name type="synonym">Phytolacca arborea</name>
    <dbReference type="NCBI Taxonomy" id="29725"/>
    <lineage>
        <taxon>Eukaryota</taxon>
        <taxon>Viridiplantae</taxon>
        <taxon>Streptophyta</taxon>
        <taxon>Embryophyta</taxon>
        <taxon>Tracheophyta</taxon>
        <taxon>Spermatophyta</taxon>
        <taxon>Magnoliopsida</taxon>
        <taxon>eudicotyledons</taxon>
        <taxon>Gunneridae</taxon>
        <taxon>Pentapetalae</taxon>
        <taxon>Caryophyllales</taxon>
        <taxon>Phytolaccaceae</taxon>
        <taxon>Phytolacca</taxon>
    </lineage>
</organism>
<feature type="chain" id="PRO_0000235847" description="Ribosome-inactivating protein PD-L1/PD-L2">
    <location>
        <begin position="1"/>
        <end position="261"/>
    </location>
</feature>
<feature type="active site" evidence="1">
    <location>
        <position position="72"/>
    </location>
</feature>
<feature type="active site" evidence="1">
    <location>
        <position position="122"/>
    </location>
</feature>
<feature type="active site" evidence="1">
    <location>
        <position position="175"/>
    </location>
</feature>
<feature type="active site" evidence="1">
    <location>
        <position position="178"/>
    </location>
</feature>
<feature type="binding site" evidence="9 15">
    <location>
        <position position="73"/>
    </location>
    <ligand>
        <name>substrate</name>
    </ligand>
</feature>
<feature type="binding site" evidence="9 15">
    <location>
        <position position="120"/>
    </location>
    <ligand>
        <name>substrate</name>
    </ligand>
</feature>
<feature type="binding site" evidence="9 15">
    <location>
        <position position="178"/>
    </location>
    <ligand>
        <name>substrate</name>
    </ligand>
</feature>
<feature type="glycosylation site" description="N-linked (GlcNAc...) asparagine; in PD-L1 and PD-L2" evidence="3 7 8 9 14 15">
    <location>
        <position position="10"/>
    </location>
</feature>
<feature type="glycosylation site" description="N-linked (GlcNAc...) asparagine; in PD-L1 and PD-L2" evidence="3 4 7">
    <location>
        <position position="43"/>
    </location>
</feature>
<feature type="glycosylation site" description="N-linked (GlcNAc...) asparagine; in PD-L1" evidence="3 7">
    <location>
        <position position="255"/>
    </location>
</feature>
<feature type="disulfide bond" evidence="8 9 14 15">
    <location>
        <begin position="34"/>
        <end position="258"/>
    </location>
</feature>
<feature type="disulfide bond" evidence="8 9 14 15">
    <location>
        <begin position="84"/>
        <end position="105"/>
    </location>
</feature>
<feature type="sequence conflict" description="In Ref. 2; AA sequence." evidence="13" ref="2">
    <original>S</original>
    <variation>Q</variation>
    <location>
        <position position="31"/>
    </location>
</feature>
<feature type="strand" evidence="16">
    <location>
        <begin position="3"/>
        <end position="10"/>
    </location>
</feature>
<feature type="helix" evidence="16">
    <location>
        <begin position="13"/>
        <end position="27"/>
    </location>
</feature>
<feature type="strand" evidence="16">
    <location>
        <begin position="37"/>
        <end position="39"/>
    </location>
</feature>
<feature type="strand" evidence="16">
    <location>
        <begin position="49"/>
        <end position="55"/>
    </location>
</feature>
<feature type="helix" evidence="16">
    <location>
        <begin position="57"/>
        <end position="59"/>
    </location>
</feature>
<feature type="strand" evidence="16">
    <location>
        <begin position="61"/>
        <end position="67"/>
    </location>
</feature>
<feature type="turn" evidence="16">
    <location>
        <begin position="68"/>
        <end position="70"/>
    </location>
</feature>
<feature type="strand" evidence="16">
    <location>
        <begin position="73"/>
        <end position="80"/>
    </location>
</feature>
<feature type="strand" evidence="16">
    <location>
        <begin position="83"/>
        <end position="89"/>
    </location>
</feature>
<feature type="helix" evidence="16">
    <location>
        <begin position="95"/>
        <end position="104"/>
    </location>
</feature>
<feature type="strand" evidence="16">
    <location>
        <begin position="105"/>
        <end position="107"/>
    </location>
</feature>
<feature type="strand" evidence="16">
    <location>
        <begin position="111"/>
        <end position="113"/>
    </location>
</feature>
<feature type="strand" evidence="16">
    <location>
        <begin position="116"/>
        <end position="118"/>
    </location>
</feature>
<feature type="helix" evidence="16">
    <location>
        <begin position="122"/>
        <end position="128"/>
    </location>
</feature>
<feature type="helix" evidence="16">
    <location>
        <begin position="134"/>
        <end position="136"/>
    </location>
</feature>
<feature type="helix" evidence="16">
    <location>
        <begin position="141"/>
        <end position="151"/>
    </location>
</feature>
<feature type="helix" evidence="16">
    <location>
        <begin position="159"/>
        <end position="172"/>
    </location>
</feature>
<feature type="helix" evidence="16">
    <location>
        <begin position="174"/>
        <end position="178"/>
    </location>
</feature>
<feature type="helix" evidence="16">
    <location>
        <begin position="180"/>
        <end position="188"/>
    </location>
</feature>
<feature type="turn" evidence="16">
    <location>
        <begin position="189"/>
        <end position="191"/>
    </location>
</feature>
<feature type="helix" evidence="16">
    <location>
        <begin position="198"/>
        <end position="215"/>
    </location>
</feature>
<feature type="strand" evidence="16">
    <location>
        <begin position="221"/>
        <end position="229"/>
    </location>
</feature>
<feature type="strand" evidence="16">
    <location>
        <begin position="235"/>
        <end position="240"/>
    </location>
</feature>
<feature type="helix" evidence="16">
    <location>
        <begin position="241"/>
        <end position="244"/>
    </location>
</feature>
<feature type="helix" evidence="16">
    <location>
        <begin position="245"/>
        <end position="247"/>
    </location>
</feature>
<accession>P84853</accession>
<proteinExistence type="evidence at protein level"/>
<name>RIPL1_PHYDI</name>
<dbReference type="EC" id="3.2.2.22" evidence="4 9"/>
<dbReference type="PDB" id="3H5K">
    <property type="method" value="X-ray"/>
    <property type="resolution" value="1.45 A"/>
    <property type="chains" value="A/B=1-261"/>
</dbReference>
<dbReference type="PDB" id="3LE7">
    <property type="method" value="X-ray"/>
    <property type="resolution" value="1.65 A"/>
    <property type="chains" value="A/B=1-261"/>
</dbReference>
<dbReference type="PDBsum" id="3H5K"/>
<dbReference type="PDBsum" id="3LE7"/>
<dbReference type="SMR" id="P84853"/>
<dbReference type="iPTMnet" id="P84853"/>
<dbReference type="BRENDA" id="3.2.2.22">
    <property type="organism ID" value="9766"/>
</dbReference>
<dbReference type="EvolutionaryTrace" id="P84853"/>
<dbReference type="GO" id="GO:0030598">
    <property type="term" value="F:rRNA N-glycosylase activity"/>
    <property type="evidence" value="ECO:0000314"/>
    <property type="project" value="UniProtKB"/>
</dbReference>
<dbReference type="GO" id="GO:0090729">
    <property type="term" value="F:toxin activity"/>
    <property type="evidence" value="ECO:0007669"/>
    <property type="project" value="UniProtKB-KW"/>
</dbReference>
<dbReference type="GO" id="GO:0006952">
    <property type="term" value="P:defense response"/>
    <property type="evidence" value="ECO:0000314"/>
    <property type="project" value="UniProtKB"/>
</dbReference>
<dbReference type="GO" id="GO:0017148">
    <property type="term" value="P:negative regulation of translation"/>
    <property type="evidence" value="ECO:0000314"/>
    <property type="project" value="UniProtKB"/>
</dbReference>
<dbReference type="FunFam" id="4.10.470.10:FF:000002">
    <property type="entry name" value="Antiviral protein I"/>
    <property type="match status" value="1"/>
</dbReference>
<dbReference type="FunFam" id="3.40.420.10:FF:000001">
    <property type="entry name" value="Ricin"/>
    <property type="match status" value="1"/>
</dbReference>
<dbReference type="Gene3D" id="3.40.420.10">
    <property type="entry name" value="Ricin (A subunit), domain 1"/>
    <property type="match status" value="1"/>
</dbReference>
<dbReference type="Gene3D" id="4.10.470.10">
    <property type="entry name" value="Ricin (A Subunit), domain 2"/>
    <property type="match status" value="1"/>
</dbReference>
<dbReference type="InterPro" id="IPR036041">
    <property type="entry name" value="Ribosome-inact_prot_sf"/>
</dbReference>
<dbReference type="InterPro" id="IPR017989">
    <property type="entry name" value="Ribosome_inactivat_1/2"/>
</dbReference>
<dbReference type="InterPro" id="IPR001574">
    <property type="entry name" value="Ribosome_inactivat_prot"/>
</dbReference>
<dbReference type="InterPro" id="IPR017988">
    <property type="entry name" value="Ribosome_inactivat_prot_CS"/>
</dbReference>
<dbReference type="InterPro" id="IPR016138">
    <property type="entry name" value="Ribosome_inactivat_prot_sub1"/>
</dbReference>
<dbReference type="InterPro" id="IPR016139">
    <property type="entry name" value="Ribosome_inactivat_prot_sub2"/>
</dbReference>
<dbReference type="PANTHER" id="PTHR33453">
    <property type="match status" value="1"/>
</dbReference>
<dbReference type="PANTHER" id="PTHR33453:SF34">
    <property type="entry name" value="RIBOSOME-INACTIVATING PROTEIN"/>
    <property type="match status" value="1"/>
</dbReference>
<dbReference type="Pfam" id="PF00161">
    <property type="entry name" value="RIP"/>
    <property type="match status" value="1"/>
</dbReference>
<dbReference type="PRINTS" id="PR00396">
    <property type="entry name" value="SHIGARICIN"/>
</dbReference>
<dbReference type="SUPFAM" id="SSF56371">
    <property type="entry name" value="Ribosome inactivating proteins (RIP)"/>
    <property type="match status" value="1"/>
</dbReference>
<dbReference type="PROSITE" id="PS00275">
    <property type="entry name" value="SHIGA_RICIN"/>
    <property type="match status" value="1"/>
</dbReference>
<evidence type="ECO:0000250" key="1">
    <source>
        <dbReference type="UniProtKB" id="P84531"/>
    </source>
</evidence>
<evidence type="ECO:0000255" key="2"/>
<evidence type="ECO:0000255" key="3">
    <source>
        <dbReference type="PROSITE-ProRule" id="PRU00498"/>
    </source>
</evidence>
<evidence type="ECO:0000269" key="4">
    <source>
    </source>
</evidence>
<evidence type="ECO:0000269" key="5">
    <source>
    </source>
</evidence>
<evidence type="ECO:0000269" key="6">
    <source>
    </source>
</evidence>
<evidence type="ECO:0000269" key="7">
    <source>
    </source>
</evidence>
<evidence type="ECO:0000269" key="8">
    <source>
    </source>
</evidence>
<evidence type="ECO:0000269" key="9">
    <source>
    </source>
</evidence>
<evidence type="ECO:0000303" key="10">
    <source>
    </source>
</evidence>
<evidence type="ECO:0000303" key="11">
    <source>
    </source>
</evidence>
<evidence type="ECO:0000303" key="12">
    <source>
    </source>
</evidence>
<evidence type="ECO:0000305" key="13"/>
<evidence type="ECO:0007744" key="14">
    <source>
        <dbReference type="PDB" id="3H5K"/>
    </source>
</evidence>
<evidence type="ECO:0007744" key="15">
    <source>
        <dbReference type="PDB" id="3LE7"/>
    </source>
</evidence>
<evidence type="ECO:0007829" key="16">
    <source>
        <dbReference type="PDB" id="3H5K"/>
    </source>
</evidence>
<protein>
    <recommendedName>
        <fullName evidence="10 11 12">Ribosome-inactivating protein PD-L1/PD-L2</fullName>
        <ecNumber evidence="4 9">3.2.2.22</ecNumber>
    </recommendedName>
    <alternativeName>
        <fullName evidence="10">rRNA N-glycosidase PD-L1/PD-L2</fullName>
    </alternativeName>
</protein>